<evidence type="ECO:0000255" key="1">
    <source>
        <dbReference type="HAMAP-Rule" id="MF_01334"/>
    </source>
</evidence>
<evidence type="ECO:0000305" key="2"/>
<protein>
    <recommendedName>
        <fullName evidence="1">Large ribosomal subunit protein bL25</fullName>
    </recommendedName>
    <alternativeName>
        <fullName evidence="2">50S ribosomal protein L25</fullName>
    </alternativeName>
    <alternativeName>
        <fullName evidence="1">General stress protein CTC</fullName>
    </alternativeName>
</protein>
<gene>
    <name evidence="1" type="primary">rplY</name>
    <name evidence="1" type="synonym">ctc</name>
    <name type="ordered locus">A1G_05135</name>
</gene>
<sequence length="203" mass="22637">MSEILELEAESRTEFGTGAARALRRAGRVPAIIYGAGKTPVSISLEEKEITKYYRKPAFISQLINLTIDKKKYKVLPKAVELHPVTDIVRHVDFVFLEKKTQKMEVPVVYEGKERALGVKRGGYFNIVKRRVTLLCDVNNIPRNITIDVTNMPMATSLKSSKIELPKGCSFVTKKEFVLATIIGRRGAKTEAEGEQQAAEAGK</sequence>
<proteinExistence type="inferred from homology"/>
<organism>
    <name type="scientific">Rickettsia rickettsii (strain Sheila Smith)</name>
    <dbReference type="NCBI Taxonomy" id="392021"/>
    <lineage>
        <taxon>Bacteria</taxon>
        <taxon>Pseudomonadati</taxon>
        <taxon>Pseudomonadota</taxon>
        <taxon>Alphaproteobacteria</taxon>
        <taxon>Rickettsiales</taxon>
        <taxon>Rickettsiaceae</taxon>
        <taxon>Rickettsieae</taxon>
        <taxon>Rickettsia</taxon>
        <taxon>spotted fever group</taxon>
    </lineage>
</organism>
<dbReference type="EMBL" id="CP000848">
    <property type="protein sequence ID" value="ABV76520.1"/>
    <property type="molecule type" value="Genomic_DNA"/>
</dbReference>
<dbReference type="RefSeq" id="WP_012151090.1">
    <property type="nucleotide sequence ID" value="NZ_CP121767.1"/>
</dbReference>
<dbReference type="SMR" id="A8GSZ5"/>
<dbReference type="GeneID" id="79937604"/>
<dbReference type="KEGG" id="rri:A1G_05135"/>
<dbReference type="HOGENOM" id="CLU_075939_0_0_5"/>
<dbReference type="Proteomes" id="UP000006832">
    <property type="component" value="Chromosome"/>
</dbReference>
<dbReference type="GO" id="GO:0022625">
    <property type="term" value="C:cytosolic large ribosomal subunit"/>
    <property type="evidence" value="ECO:0007669"/>
    <property type="project" value="TreeGrafter"/>
</dbReference>
<dbReference type="GO" id="GO:0008097">
    <property type="term" value="F:5S rRNA binding"/>
    <property type="evidence" value="ECO:0007669"/>
    <property type="project" value="InterPro"/>
</dbReference>
<dbReference type="GO" id="GO:0003735">
    <property type="term" value="F:structural constituent of ribosome"/>
    <property type="evidence" value="ECO:0007669"/>
    <property type="project" value="InterPro"/>
</dbReference>
<dbReference type="GO" id="GO:0006412">
    <property type="term" value="P:translation"/>
    <property type="evidence" value="ECO:0007669"/>
    <property type="project" value="UniProtKB-UniRule"/>
</dbReference>
<dbReference type="CDD" id="cd00495">
    <property type="entry name" value="Ribosomal_L25_TL5_CTC"/>
    <property type="match status" value="1"/>
</dbReference>
<dbReference type="Gene3D" id="2.170.120.20">
    <property type="entry name" value="Ribosomal protein L25, beta domain"/>
    <property type="match status" value="1"/>
</dbReference>
<dbReference type="Gene3D" id="2.40.240.10">
    <property type="entry name" value="Ribosomal Protein L25, Chain P"/>
    <property type="match status" value="1"/>
</dbReference>
<dbReference type="HAMAP" id="MF_01336">
    <property type="entry name" value="Ribosomal_bL25"/>
    <property type="match status" value="1"/>
</dbReference>
<dbReference type="HAMAP" id="MF_01334">
    <property type="entry name" value="Ribosomal_bL25_CTC"/>
    <property type="match status" value="1"/>
</dbReference>
<dbReference type="InterPro" id="IPR020056">
    <property type="entry name" value="Rbsml_bL25/Gln-tRNA_synth_N"/>
</dbReference>
<dbReference type="InterPro" id="IPR011035">
    <property type="entry name" value="Ribosomal_bL25/Gln-tRNA_synth"/>
</dbReference>
<dbReference type="InterPro" id="IPR020057">
    <property type="entry name" value="Ribosomal_bL25_b-dom"/>
</dbReference>
<dbReference type="InterPro" id="IPR037121">
    <property type="entry name" value="Ribosomal_bL25_C"/>
</dbReference>
<dbReference type="InterPro" id="IPR001021">
    <property type="entry name" value="Ribosomal_bL25_long"/>
</dbReference>
<dbReference type="InterPro" id="IPR020055">
    <property type="entry name" value="Ribosomal_bL25_short"/>
</dbReference>
<dbReference type="InterPro" id="IPR029751">
    <property type="entry name" value="Ribosomal_L25_dom"/>
</dbReference>
<dbReference type="InterPro" id="IPR020930">
    <property type="entry name" value="Ribosomal_uL5_bac-type"/>
</dbReference>
<dbReference type="NCBIfam" id="TIGR00731">
    <property type="entry name" value="bL25_bact_ctc"/>
    <property type="match status" value="1"/>
</dbReference>
<dbReference type="NCBIfam" id="NF004128">
    <property type="entry name" value="PRK05618.1-2"/>
    <property type="match status" value="1"/>
</dbReference>
<dbReference type="NCBIfam" id="NF004612">
    <property type="entry name" value="PRK05943.1"/>
    <property type="match status" value="1"/>
</dbReference>
<dbReference type="PANTHER" id="PTHR33284">
    <property type="entry name" value="RIBOSOMAL PROTEIN L25/GLN-TRNA SYNTHETASE, ANTI-CODON-BINDING DOMAIN-CONTAINING PROTEIN"/>
    <property type="match status" value="1"/>
</dbReference>
<dbReference type="PANTHER" id="PTHR33284:SF1">
    <property type="entry name" value="RIBOSOMAL PROTEIN L25_GLN-TRNA SYNTHETASE, ANTI-CODON-BINDING DOMAIN-CONTAINING PROTEIN"/>
    <property type="match status" value="1"/>
</dbReference>
<dbReference type="Pfam" id="PF01386">
    <property type="entry name" value="Ribosomal_L25p"/>
    <property type="match status" value="1"/>
</dbReference>
<dbReference type="Pfam" id="PF14693">
    <property type="entry name" value="Ribosomal_TL5_C"/>
    <property type="match status" value="1"/>
</dbReference>
<dbReference type="SUPFAM" id="SSF50715">
    <property type="entry name" value="Ribosomal protein L25-like"/>
    <property type="match status" value="1"/>
</dbReference>
<comment type="function">
    <text evidence="1">This is one of the proteins that binds to the 5S RNA in the ribosome where it forms part of the central protuberance.</text>
</comment>
<comment type="subunit">
    <text evidence="1">Part of the 50S ribosomal subunit; part of the 5S rRNA/L5/L18/L25 subcomplex. Contacts the 5S rRNA. Binds to the 5S rRNA independently of L5 and L18.</text>
</comment>
<comment type="similarity">
    <text evidence="1">Belongs to the bacterial ribosomal protein bL25 family. CTC subfamily.</text>
</comment>
<name>RL25_RICRS</name>
<feature type="chain" id="PRO_1000052933" description="Large ribosomal subunit protein bL25">
    <location>
        <begin position="1"/>
        <end position="203"/>
    </location>
</feature>
<keyword id="KW-0687">Ribonucleoprotein</keyword>
<keyword id="KW-0689">Ribosomal protein</keyword>
<keyword id="KW-0694">RNA-binding</keyword>
<keyword id="KW-0699">rRNA-binding</keyword>
<reference key="1">
    <citation type="submission" date="2007-09" db="EMBL/GenBank/DDBJ databases">
        <title>Complete genome sequence of Rickettsia rickettsii.</title>
        <authorList>
            <person name="Madan A."/>
            <person name="Fahey J."/>
            <person name="Helton E."/>
            <person name="Ketteman M."/>
            <person name="Madan A."/>
            <person name="Rodrigues S."/>
            <person name="Sanchez A."/>
            <person name="Dasch G."/>
            <person name="Eremeeva M."/>
        </authorList>
    </citation>
    <scope>NUCLEOTIDE SEQUENCE [LARGE SCALE GENOMIC DNA]</scope>
    <source>
        <strain>Sheila Smith</strain>
    </source>
</reference>
<accession>A8GSZ5</accession>